<evidence type="ECO:0000255" key="1">
    <source>
        <dbReference type="HAMAP-Rule" id="MF_01328"/>
    </source>
</evidence>
<evidence type="ECO:0000256" key="2">
    <source>
        <dbReference type="SAM" id="MobiDB-lite"/>
    </source>
</evidence>
<evidence type="ECO:0000305" key="3"/>
<organism>
    <name type="scientific">Methylibium petroleiphilum (strain ATCC BAA-1232 / LMG 22953 / PM1)</name>
    <dbReference type="NCBI Taxonomy" id="420662"/>
    <lineage>
        <taxon>Bacteria</taxon>
        <taxon>Pseudomonadati</taxon>
        <taxon>Pseudomonadota</taxon>
        <taxon>Betaproteobacteria</taxon>
        <taxon>Burkholderiales</taxon>
        <taxon>Sphaerotilaceae</taxon>
        <taxon>Methylibium</taxon>
    </lineage>
</organism>
<accession>A2SLF6</accession>
<feature type="chain" id="PRO_1000052441" description="Large ribosomal subunit protein uL4">
    <location>
        <begin position="1"/>
        <end position="206"/>
    </location>
</feature>
<feature type="region of interest" description="Disordered" evidence="2">
    <location>
        <begin position="44"/>
        <end position="77"/>
    </location>
</feature>
<feature type="compositionally biased region" description="Basic residues" evidence="2">
    <location>
        <begin position="56"/>
        <end position="70"/>
    </location>
</feature>
<dbReference type="EMBL" id="CP000555">
    <property type="protein sequence ID" value="ABM96395.1"/>
    <property type="molecule type" value="Genomic_DNA"/>
</dbReference>
<dbReference type="RefSeq" id="WP_011831016.1">
    <property type="nucleotide sequence ID" value="NC_008825.1"/>
</dbReference>
<dbReference type="SMR" id="A2SLF6"/>
<dbReference type="STRING" id="420662.Mpe_A3442"/>
<dbReference type="KEGG" id="mpt:Mpe_A3442"/>
<dbReference type="eggNOG" id="COG0088">
    <property type="taxonomic scope" value="Bacteria"/>
</dbReference>
<dbReference type="HOGENOM" id="CLU_041575_5_2_4"/>
<dbReference type="Proteomes" id="UP000000366">
    <property type="component" value="Chromosome"/>
</dbReference>
<dbReference type="GO" id="GO:1990904">
    <property type="term" value="C:ribonucleoprotein complex"/>
    <property type="evidence" value="ECO:0007669"/>
    <property type="project" value="UniProtKB-KW"/>
</dbReference>
<dbReference type="GO" id="GO:0005840">
    <property type="term" value="C:ribosome"/>
    <property type="evidence" value="ECO:0007669"/>
    <property type="project" value="UniProtKB-KW"/>
</dbReference>
<dbReference type="GO" id="GO:0019843">
    <property type="term" value="F:rRNA binding"/>
    <property type="evidence" value="ECO:0007669"/>
    <property type="project" value="UniProtKB-UniRule"/>
</dbReference>
<dbReference type="GO" id="GO:0003735">
    <property type="term" value="F:structural constituent of ribosome"/>
    <property type="evidence" value="ECO:0007669"/>
    <property type="project" value="InterPro"/>
</dbReference>
<dbReference type="GO" id="GO:0006412">
    <property type="term" value="P:translation"/>
    <property type="evidence" value="ECO:0007669"/>
    <property type="project" value="UniProtKB-UniRule"/>
</dbReference>
<dbReference type="Gene3D" id="3.40.1370.10">
    <property type="match status" value="1"/>
</dbReference>
<dbReference type="HAMAP" id="MF_01328_B">
    <property type="entry name" value="Ribosomal_uL4_B"/>
    <property type="match status" value="1"/>
</dbReference>
<dbReference type="InterPro" id="IPR002136">
    <property type="entry name" value="Ribosomal_uL4"/>
</dbReference>
<dbReference type="InterPro" id="IPR013005">
    <property type="entry name" value="Ribosomal_uL4-like"/>
</dbReference>
<dbReference type="InterPro" id="IPR023574">
    <property type="entry name" value="Ribosomal_uL4_dom_sf"/>
</dbReference>
<dbReference type="NCBIfam" id="TIGR03953">
    <property type="entry name" value="rplD_bact"/>
    <property type="match status" value="1"/>
</dbReference>
<dbReference type="PANTHER" id="PTHR10746">
    <property type="entry name" value="50S RIBOSOMAL PROTEIN L4"/>
    <property type="match status" value="1"/>
</dbReference>
<dbReference type="PANTHER" id="PTHR10746:SF6">
    <property type="entry name" value="LARGE RIBOSOMAL SUBUNIT PROTEIN UL4M"/>
    <property type="match status" value="1"/>
</dbReference>
<dbReference type="Pfam" id="PF00573">
    <property type="entry name" value="Ribosomal_L4"/>
    <property type="match status" value="1"/>
</dbReference>
<dbReference type="SUPFAM" id="SSF52166">
    <property type="entry name" value="Ribosomal protein L4"/>
    <property type="match status" value="1"/>
</dbReference>
<comment type="function">
    <text evidence="1">One of the primary rRNA binding proteins, this protein initially binds near the 5'-end of the 23S rRNA. It is important during the early stages of 50S assembly. It makes multiple contacts with different domains of the 23S rRNA in the assembled 50S subunit and ribosome.</text>
</comment>
<comment type="function">
    <text evidence="1">Forms part of the polypeptide exit tunnel.</text>
</comment>
<comment type="subunit">
    <text evidence="1">Part of the 50S ribosomal subunit.</text>
</comment>
<comment type="similarity">
    <text evidence="1">Belongs to the universal ribosomal protein uL4 family.</text>
</comment>
<proteinExistence type="inferred from homology"/>
<gene>
    <name evidence="1" type="primary">rplD</name>
    <name type="ordered locus">Mpe_A3442</name>
</gene>
<name>RL4_METPP</name>
<reference key="1">
    <citation type="journal article" date="2007" name="J. Bacteriol.">
        <title>Whole-genome analysis of the methyl tert-butyl ether-degrading beta-proteobacterium Methylibium petroleiphilum PM1.</title>
        <authorList>
            <person name="Kane S.R."/>
            <person name="Chakicherla A.Y."/>
            <person name="Chain P.S.G."/>
            <person name="Schmidt R."/>
            <person name="Shin M.W."/>
            <person name="Legler T.C."/>
            <person name="Scow K.M."/>
            <person name="Larimer F.W."/>
            <person name="Lucas S.M."/>
            <person name="Richardson P.M."/>
            <person name="Hristova K.R."/>
        </authorList>
    </citation>
    <scope>NUCLEOTIDE SEQUENCE [LARGE SCALE GENOMIC DNA]</scope>
    <source>
        <strain>ATCC BAA-1232 / LMG 22953 / PM1</strain>
    </source>
</reference>
<protein>
    <recommendedName>
        <fullName evidence="1">Large ribosomal subunit protein uL4</fullName>
    </recommendedName>
    <alternativeName>
        <fullName evidence="3">50S ribosomal protein L4</fullName>
    </alternativeName>
</protein>
<keyword id="KW-1185">Reference proteome</keyword>
<keyword id="KW-0687">Ribonucleoprotein</keyword>
<keyword id="KW-0689">Ribosomal protein</keyword>
<keyword id="KW-0694">RNA-binding</keyword>
<keyword id="KW-0699">rRNA-binding</keyword>
<sequence length="206" mass="22841">MELELLNEQGQAASKVDAPDTVFGRDYNEALVHQVVVAYQANARQGTRAQKDRQTVKHSTKKPWRQKGTGRARAGMTSSPLWRGGGRIFPNSPEENFSHKVNKKMYRAGMAAIFSQLAREGRLAVVDSIKVETPKTKALAAKFKAMGLESVLVIADEVDENLFLASRNLANVLVIEPRYADPLSLVFYKKVLVTKGAIEKLKEMLA</sequence>